<proteinExistence type="inferred from homology"/>
<organism>
    <name type="scientific">Escherichia coli O157:H7</name>
    <dbReference type="NCBI Taxonomy" id="83334"/>
    <lineage>
        <taxon>Bacteria</taxon>
        <taxon>Pseudomonadati</taxon>
        <taxon>Pseudomonadota</taxon>
        <taxon>Gammaproteobacteria</taxon>
        <taxon>Enterobacterales</taxon>
        <taxon>Enterobacteriaceae</taxon>
        <taxon>Escherichia</taxon>
    </lineage>
</organism>
<evidence type="ECO:0000250" key="1">
    <source>
        <dbReference type="UniProtKB" id="P15993"/>
    </source>
</evidence>
<evidence type="ECO:0000255" key="2"/>
<evidence type="ECO:0000305" key="3"/>
<sequence length="457" mass="49663">MMEGQQHGEQLKRGLKNRHIQLIALGGAIGTGLFLGSASVIQSAGPGIILGYAIAGFIAFLIMRQLGEMVVEEPVAGSFSHFAYKYWGSFAGFASGWNYWVLYVLVAMAELTAVGKYIQFWYPEIPTWVSAAVFFVVINAINLTNVTVFGEMEFWFAIIKVIAVVAMIIFGGWLLFSGNGGPQASVSNLWDQGGFLPHGFTGLVMMMAIIMFSFGGLELVGITAAEADNPEQSIPKATNQVIYRILIFYIGSLAVLLSLMPWTRVTADTSPFVLIFHELGDTFVANALNIVVLTAALSVYNSCVYCNSRMLFGLAQQGNAPKALASVDKRGVPVNTILVSALVTALCVLINYLAPESAFGLLMALVVSALVINWAMISLAHMKFRRAKQEQGVVTRFPALLYPLGNWICLLFMAVVLVIMLMTPGMAISVYLIPVWLVVLGIGYLFKEKTAKAVKAH</sequence>
<accession>Q8X968</accession>
<feature type="chain" id="PRO_0000054195" description="Aromatic amino acid transport protein AroP">
    <location>
        <begin position="1"/>
        <end position="457"/>
    </location>
</feature>
<feature type="topological domain" description="Cytoplasmic" evidence="2">
    <location>
        <begin position="1"/>
        <end position="19"/>
    </location>
</feature>
<feature type="transmembrane region" description="Helical" evidence="2">
    <location>
        <begin position="20"/>
        <end position="40"/>
    </location>
</feature>
<feature type="topological domain" description="Periplasmic" evidence="2">
    <location>
        <begin position="41"/>
        <end position="42"/>
    </location>
</feature>
<feature type="transmembrane region" description="Helical" evidence="2">
    <location>
        <begin position="43"/>
        <end position="63"/>
    </location>
</feature>
<feature type="topological domain" description="Cytoplasmic" evidence="2">
    <location>
        <begin position="64"/>
        <end position="86"/>
    </location>
</feature>
<feature type="transmembrane region" description="Helical" evidence="2">
    <location>
        <begin position="87"/>
        <end position="107"/>
    </location>
</feature>
<feature type="topological domain" description="Periplasmic" evidence="2">
    <location>
        <begin position="108"/>
        <end position="117"/>
    </location>
</feature>
<feature type="transmembrane region" description="Helical" evidence="2">
    <location>
        <begin position="118"/>
        <end position="138"/>
    </location>
</feature>
<feature type="topological domain" description="Cytoplasmic" evidence="2">
    <location>
        <begin position="139"/>
        <end position="155"/>
    </location>
</feature>
<feature type="transmembrane region" description="Helical" evidence="2">
    <location>
        <begin position="156"/>
        <end position="176"/>
    </location>
</feature>
<feature type="topological domain" description="Periplasmic" evidence="2">
    <location>
        <begin position="177"/>
        <end position="201"/>
    </location>
</feature>
<feature type="transmembrane region" description="Helical" evidence="2">
    <location>
        <begin position="202"/>
        <end position="222"/>
    </location>
</feature>
<feature type="topological domain" description="Cytoplasmic" evidence="2">
    <location>
        <begin position="223"/>
        <end position="240"/>
    </location>
</feature>
<feature type="transmembrane region" description="Helical" evidence="2">
    <location>
        <begin position="241"/>
        <end position="261"/>
    </location>
</feature>
<feature type="topological domain" description="Periplasmic" evidence="2">
    <location>
        <begin position="262"/>
        <end position="271"/>
    </location>
</feature>
<feature type="transmembrane region" description="Helical" evidence="2">
    <location>
        <begin position="272"/>
        <end position="292"/>
    </location>
</feature>
<feature type="topological domain" description="Cytoplasmic" evidence="2">
    <location>
        <begin position="293"/>
        <end position="333"/>
    </location>
</feature>
<feature type="transmembrane region" description="Helical" evidence="2">
    <location>
        <begin position="334"/>
        <end position="354"/>
    </location>
</feature>
<feature type="topological domain" description="Periplasmic" evidence="2">
    <location>
        <begin position="355"/>
        <end position="358"/>
    </location>
</feature>
<feature type="transmembrane region" description="Helical" evidence="2">
    <location>
        <begin position="359"/>
        <end position="379"/>
    </location>
</feature>
<feature type="topological domain" description="Cytoplasmic" evidence="2">
    <location>
        <begin position="380"/>
        <end position="407"/>
    </location>
</feature>
<feature type="transmembrane region" description="Helical" evidence="2">
    <location>
        <begin position="408"/>
        <end position="428"/>
    </location>
</feature>
<feature type="topological domain" description="Periplasmic" evidence="2">
    <location>
        <position position="429"/>
    </location>
</feature>
<feature type="transmembrane region" description="Helical" evidence="2">
    <location>
        <begin position="430"/>
        <end position="450"/>
    </location>
</feature>
<feature type="topological domain" description="Cytoplasmic" evidence="2">
    <location>
        <begin position="451"/>
        <end position="457"/>
    </location>
</feature>
<name>AROP_ECO57</name>
<gene>
    <name type="primary">aroP</name>
    <name type="ordered locus">Z0122</name>
    <name type="ordered locus">ECs0116</name>
</gene>
<dbReference type="EMBL" id="AE005174">
    <property type="protein sequence ID" value="AAG54416.1"/>
    <property type="molecule type" value="Genomic_DNA"/>
</dbReference>
<dbReference type="EMBL" id="BA000007">
    <property type="protein sequence ID" value="BAB33539.2"/>
    <property type="status" value="ALT_INIT"/>
    <property type="molecule type" value="Genomic_DNA"/>
</dbReference>
<dbReference type="PIR" id="D85494">
    <property type="entry name" value="D85494"/>
</dbReference>
<dbReference type="PIR" id="D90643">
    <property type="entry name" value="D90643"/>
</dbReference>
<dbReference type="RefSeq" id="NP_308143.1">
    <property type="nucleotide sequence ID" value="NC_002695.1"/>
</dbReference>
<dbReference type="RefSeq" id="WP_010904500.1">
    <property type="nucleotide sequence ID" value="NZ_VOAI01000002.1"/>
</dbReference>
<dbReference type="SMR" id="Q8X968"/>
<dbReference type="STRING" id="155864.Z0122"/>
<dbReference type="GeneID" id="913640"/>
<dbReference type="KEGG" id="ece:Z0122"/>
<dbReference type="KEGG" id="ecs:ECs_0116"/>
<dbReference type="PATRIC" id="fig|386585.9.peg.214"/>
<dbReference type="eggNOG" id="COG1113">
    <property type="taxonomic scope" value="Bacteria"/>
</dbReference>
<dbReference type="HOGENOM" id="CLU_007946_9_3_6"/>
<dbReference type="OMA" id="LFKALWY"/>
<dbReference type="Proteomes" id="UP000000558">
    <property type="component" value="Chromosome"/>
</dbReference>
<dbReference type="Proteomes" id="UP000002519">
    <property type="component" value="Chromosome"/>
</dbReference>
<dbReference type="GO" id="GO:0005886">
    <property type="term" value="C:plasma membrane"/>
    <property type="evidence" value="ECO:0007669"/>
    <property type="project" value="UniProtKB-SubCell"/>
</dbReference>
<dbReference type="GO" id="GO:0006865">
    <property type="term" value="P:amino acid transport"/>
    <property type="evidence" value="ECO:0007669"/>
    <property type="project" value="UniProtKB-KW"/>
</dbReference>
<dbReference type="GO" id="GO:0055085">
    <property type="term" value="P:transmembrane transport"/>
    <property type="evidence" value="ECO:0007669"/>
    <property type="project" value="InterPro"/>
</dbReference>
<dbReference type="FunFam" id="1.20.1740.10:FF:000001">
    <property type="entry name" value="Amino acid permease"/>
    <property type="match status" value="1"/>
</dbReference>
<dbReference type="Gene3D" id="1.20.1740.10">
    <property type="entry name" value="Amino acid/polyamine transporter I"/>
    <property type="match status" value="1"/>
</dbReference>
<dbReference type="InterPro" id="IPR004841">
    <property type="entry name" value="AA-permease/SLC12A_dom"/>
</dbReference>
<dbReference type="InterPro" id="IPR004840">
    <property type="entry name" value="Amino_acid_permease_CS"/>
</dbReference>
<dbReference type="NCBIfam" id="NF007594">
    <property type="entry name" value="PRK10238.1"/>
    <property type="match status" value="1"/>
</dbReference>
<dbReference type="PANTHER" id="PTHR43495:SF4">
    <property type="entry name" value="AROMATIC AMINO ACID TRANSPORT PROTEIN AROP"/>
    <property type="match status" value="1"/>
</dbReference>
<dbReference type="PANTHER" id="PTHR43495">
    <property type="entry name" value="GABA PERMEASE"/>
    <property type="match status" value="1"/>
</dbReference>
<dbReference type="Pfam" id="PF00324">
    <property type="entry name" value="AA_permease"/>
    <property type="match status" value="1"/>
</dbReference>
<dbReference type="PIRSF" id="PIRSF006060">
    <property type="entry name" value="AA_transporter"/>
    <property type="match status" value="1"/>
</dbReference>
<dbReference type="PROSITE" id="PS00218">
    <property type="entry name" value="AMINO_ACID_PERMEASE_1"/>
    <property type="match status" value="1"/>
</dbReference>
<reference key="1">
    <citation type="journal article" date="2001" name="Nature">
        <title>Genome sequence of enterohaemorrhagic Escherichia coli O157:H7.</title>
        <authorList>
            <person name="Perna N.T."/>
            <person name="Plunkett G. III"/>
            <person name="Burland V."/>
            <person name="Mau B."/>
            <person name="Glasner J.D."/>
            <person name="Rose D.J."/>
            <person name="Mayhew G.F."/>
            <person name="Evans P.S."/>
            <person name="Gregor J."/>
            <person name="Kirkpatrick H.A."/>
            <person name="Posfai G."/>
            <person name="Hackett J."/>
            <person name="Klink S."/>
            <person name="Boutin A."/>
            <person name="Shao Y."/>
            <person name="Miller L."/>
            <person name="Grotbeck E.J."/>
            <person name="Davis N.W."/>
            <person name="Lim A."/>
            <person name="Dimalanta E.T."/>
            <person name="Potamousis K."/>
            <person name="Apodaca J."/>
            <person name="Anantharaman T.S."/>
            <person name="Lin J."/>
            <person name="Yen G."/>
            <person name="Schwartz D.C."/>
            <person name="Welch R.A."/>
            <person name="Blattner F.R."/>
        </authorList>
    </citation>
    <scope>NUCLEOTIDE SEQUENCE [LARGE SCALE GENOMIC DNA]</scope>
    <source>
        <strain>O157:H7 / EDL933 / ATCC 700927 / EHEC</strain>
    </source>
</reference>
<reference key="2">
    <citation type="journal article" date="2001" name="DNA Res.">
        <title>Complete genome sequence of enterohemorrhagic Escherichia coli O157:H7 and genomic comparison with a laboratory strain K-12.</title>
        <authorList>
            <person name="Hayashi T."/>
            <person name="Makino K."/>
            <person name="Ohnishi M."/>
            <person name="Kurokawa K."/>
            <person name="Ishii K."/>
            <person name="Yokoyama K."/>
            <person name="Han C.-G."/>
            <person name="Ohtsubo E."/>
            <person name="Nakayama K."/>
            <person name="Murata T."/>
            <person name="Tanaka M."/>
            <person name="Tobe T."/>
            <person name="Iida T."/>
            <person name="Takami H."/>
            <person name="Honda T."/>
            <person name="Sasakawa C."/>
            <person name="Ogasawara N."/>
            <person name="Yasunaga T."/>
            <person name="Kuhara S."/>
            <person name="Shiba T."/>
            <person name="Hattori M."/>
            <person name="Shinagawa H."/>
        </authorList>
    </citation>
    <scope>NUCLEOTIDE SEQUENCE [LARGE SCALE GENOMIC DNA]</scope>
    <source>
        <strain>O157:H7 / Sakai / RIMD 0509952 / EHEC</strain>
    </source>
</reference>
<protein>
    <recommendedName>
        <fullName evidence="1">Aromatic amino acid transport protein AroP</fullName>
    </recommendedName>
    <alternativeName>
        <fullName evidence="1">Aromatic amino acid:H(+) symporter AroP</fullName>
    </alternativeName>
    <alternativeName>
        <fullName evidence="1">General aromatic amino acid permease</fullName>
    </alternativeName>
</protein>
<comment type="function">
    <text evidence="1">Permease that is involved in the active transport across the cytoplasmic membrane of all three aromatic amino acids, phenylalanine, tyrosine and tryptophan.</text>
</comment>
<comment type="catalytic activity">
    <reaction evidence="1">
        <text>L-phenylalanine(in) + H(+)(in) = L-phenylalanine(out) + H(+)(out)</text>
        <dbReference type="Rhea" id="RHEA:28923"/>
        <dbReference type="ChEBI" id="CHEBI:15378"/>
        <dbReference type="ChEBI" id="CHEBI:58095"/>
    </reaction>
    <physiologicalReaction direction="right-to-left" evidence="1">
        <dbReference type="Rhea" id="RHEA:28925"/>
    </physiologicalReaction>
</comment>
<comment type="catalytic activity">
    <reaction evidence="1">
        <text>L-tryptophan(in) + H(+)(in) = L-tryptophan(out) + H(+)(out)</text>
        <dbReference type="Rhea" id="RHEA:28879"/>
        <dbReference type="ChEBI" id="CHEBI:15378"/>
        <dbReference type="ChEBI" id="CHEBI:57912"/>
    </reaction>
    <physiologicalReaction direction="right-to-left" evidence="1">
        <dbReference type="Rhea" id="RHEA:28881"/>
    </physiologicalReaction>
</comment>
<comment type="catalytic activity">
    <reaction evidence="1">
        <text>L-tyrosine(in) + H(+)(in) = L-tyrosine(out) + H(+)(out)</text>
        <dbReference type="Rhea" id="RHEA:28875"/>
        <dbReference type="ChEBI" id="CHEBI:15378"/>
        <dbReference type="ChEBI" id="CHEBI:58315"/>
    </reaction>
    <physiologicalReaction direction="right-to-left" evidence="1">
        <dbReference type="Rhea" id="RHEA:28877"/>
    </physiologicalReaction>
</comment>
<comment type="subcellular location">
    <subcellularLocation>
        <location evidence="1">Cell inner membrane</location>
        <topology evidence="1">Multi-pass membrane protein</topology>
    </subcellularLocation>
</comment>
<comment type="similarity">
    <text evidence="3">Belongs to the amino acid-polyamine-organocation (APC) superfamily. Amino acid transporter (AAT) (TC 2.A.3.1) family.</text>
</comment>
<comment type="sequence caution" evidence="3">
    <conflict type="erroneous initiation">
        <sequence resource="EMBL-CDS" id="BAB33539"/>
    </conflict>
    <text>Truncated N-terminus.</text>
</comment>
<keyword id="KW-0029">Amino-acid transport</keyword>
<keyword id="KW-0997">Cell inner membrane</keyword>
<keyword id="KW-1003">Cell membrane</keyword>
<keyword id="KW-0472">Membrane</keyword>
<keyword id="KW-1185">Reference proteome</keyword>
<keyword id="KW-0812">Transmembrane</keyword>
<keyword id="KW-1133">Transmembrane helix</keyword>
<keyword id="KW-0813">Transport</keyword>